<name>GUAA_FLAPJ</name>
<proteinExistence type="inferred from homology"/>
<reference key="1">
    <citation type="journal article" date="2007" name="Nat. Biotechnol.">
        <title>Complete genome sequence of the fish pathogen Flavobacterium psychrophilum.</title>
        <authorList>
            <person name="Duchaud E."/>
            <person name="Boussaha M."/>
            <person name="Loux V."/>
            <person name="Bernardet J.-F."/>
            <person name="Michel C."/>
            <person name="Kerouault B."/>
            <person name="Mondot S."/>
            <person name="Nicolas P."/>
            <person name="Bossy R."/>
            <person name="Caron C."/>
            <person name="Bessieres P."/>
            <person name="Gibrat J.-F."/>
            <person name="Claverol S."/>
            <person name="Dumetz F."/>
            <person name="Le Henaff M."/>
            <person name="Benmansour A."/>
        </authorList>
    </citation>
    <scope>NUCLEOTIDE SEQUENCE [LARGE SCALE GENOMIC DNA]</scope>
    <source>
        <strain>ATCC 49511 / DSM 21280 / CIP 103535 / JIP02/86</strain>
    </source>
</reference>
<keyword id="KW-0067">ATP-binding</keyword>
<keyword id="KW-0315">Glutamine amidotransferase</keyword>
<keyword id="KW-0332">GMP biosynthesis</keyword>
<keyword id="KW-0436">Ligase</keyword>
<keyword id="KW-0547">Nucleotide-binding</keyword>
<keyword id="KW-0658">Purine biosynthesis</keyword>
<keyword id="KW-1185">Reference proteome</keyword>
<protein>
    <recommendedName>
        <fullName evidence="1">GMP synthase [glutamine-hydrolyzing]</fullName>
        <ecNumber evidence="1">6.3.5.2</ecNumber>
    </recommendedName>
    <alternativeName>
        <fullName evidence="1">GMP synthetase</fullName>
    </alternativeName>
    <alternativeName>
        <fullName evidence="1">Glutamine amidotransferase</fullName>
    </alternativeName>
</protein>
<dbReference type="EC" id="6.3.5.2" evidence="1"/>
<dbReference type="EMBL" id="AM398681">
    <property type="protein sequence ID" value="CAL43960.1"/>
    <property type="molecule type" value="Genomic_DNA"/>
</dbReference>
<dbReference type="RefSeq" id="WP_011963998.1">
    <property type="nucleotide sequence ID" value="NC_009613.3"/>
</dbReference>
<dbReference type="RefSeq" id="YP_001296762.1">
    <property type="nucleotide sequence ID" value="NC_009613.3"/>
</dbReference>
<dbReference type="SMR" id="A6H0T6"/>
<dbReference type="STRING" id="402612.FP1894"/>
<dbReference type="EnsemblBacteria" id="CAL43960">
    <property type="protein sequence ID" value="CAL43960"/>
    <property type="gene ID" value="FP1894"/>
</dbReference>
<dbReference type="GeneID" id="66551922"/>
<dbReference type="KEGG" id="fps:FP1894"/>
<dbReference type="PATRIC" id="fig|402612.5.peg.1920"/>
<dbReference type="eggNOG" id="COG0518">
    <property type="taxonomic scope" value="Bacteria"/>
</dbReference>
<dbReference type="eggNOG" id="COG0519">
    <property type="taxonomic scope" value="Bacteria"/>
</dbReference>
<dbReference type="HOGENOM" id="CLU_014340_0_5_10"/>
<dbReference type="OrthoDB" id="9802219at2"/>
<dbReference type="UniPathway" id="UPA00189">
    <property type="reaction ID" value="UER00296"/>
</dbReference>
<dbReference type="Proteomes" id="UP000006394">
    <property type="component" value="Chromosome"/>
</dbReference>
<dbReference type="GO" id="GO:0005829">
    <property type="term" value="C:cytosol"/>
    <property type="evidence" value="ECO:0007669"/>
    <property type="project" value="TreeGrafter"/>
</dbReference>
<dbReference type="GO" id="GO:0005524">
    <property type="term" value="F:ATP binding"/>
    <property type="evidence" value="ECO:0007669"/>
    <property type="project" value="UniProtKB-UniRule"/>
</dbReference>
<dbReference type="GO" id="GO:0003921">
    <property type="term" value="F:GMP synthase activity"/>
    <property type="evidence" value="ECO:0007669"/>
    <property type="project" value="InterPro"/>
</dbReference>
<dbReference type="CDD" id="cd01742">
    <property type="entry name" value="GATase1_GMP_Synthase"/>
    <property type="match status" value="1"/>
</dbReference>
<dbReference type="CDD" id="cd01997">
    <property type="entry name" value="GMP_synthase_C"/>
    <property type="match status" value="1"/>
</dbReference>
<dbReference type="FunFam" id="3.30.300.10:FF:000002">
    <property type="entry name" value="GMP synthase [glutamine-hydrolyzing]"/>
    <property type="match status" value="1"/>
</dbReference>
<dbReference type="FunFam" id="3.40.50.620:FF:000001">
    <property type="entry name" value="GMP synthase [glutamine-hydrolyzing]"/>
    <property type="match status" value="1"/>
</dbReference>
<dbReference type="FunFam" id="3.40.50.880:FF:000047">
    <property type="entry name" value="GMP synthase [glutamine-hydrolyzing] subunit A"/>
    <property type="match status" value="1"/>
</dbReference>
<dbReference type="Gene3D" id="3.30.300.10">
    <property type="match status" value="1"/>
</dbReference>
<dbReference type="Gene3D" id="3.40.50.880">
    <property type="match status" value="1"/>
</dbReference>
<dbReference type="Gene3D" id="3.40.50.620">
    <property type="entry name" value="HUPs"/>
    <property type="match status" value="1"/>
</dbReference>
<dbReference type="HAMAP" id="MF_00344">
    <property type="entry name" value="GMP_synthase"/>
    <property type="match status" value="1"/>
</dbReference>
<dbReference type="InterPro" id="IPR029062">
    <property type="entry name" value="Class_I_gatase-like"/>
</dbReference>
<dbReference type="InterPro" id="IPR017926">
    <property type="entry name" value="GATASE"/>
</dbReference>
<dbReference type="InterPro" id="IPR001674">
    <property type="entry name" value="GMP_synth_C"/>
</dbReference>
<dbReference type="InterPro" id="IPR004739">
    <property type="entry name" value="GMP_synth_GATase"/>
</dbReference>
<dbReference type="InterPro" id="IPR022955">
    <property type="entry name" value="GMP_synthase"/>
</dbReference>
<dbReference type="InterPro" id="IPR025777">
    <property type="entry name" value="GMPS_ATP_PPase_dom"/>
</dbReference>
<dbReference type="InterPro" id="IPR022310">
    <property type="entry name" value="NAD/GMP_synthase"/>
</dbReference>
<dbReference type="InterPro" id="IPR014729">
    <property type="entry name" value="Rossmann-like_a/b/a_fold"/>
</dbReference>
<dbReference type="NCBIfam" id="TIGR00884">
    <property type="entry name" value="guaA_Cterm"/>
    <property type="match status" value="1"/>
</dbReference>
<dbReference type="NCBIfam" id="TIGR00888">
    <property type="entry name" value="guaA_Nterm"/>
    <property type="match status" value="1"/>
</dbReference>
<dbReference type="NCBIfam" id="NF000848">
    <property type="entry name" value="PRK00074.1"/>
    <property type="match status" value="1"/>
</dbReference>
<dbReference type="PANTHER" id="PTHR11922:SF2">
    <property type="entry name" value="GMP SYNTHASE [GLUTAMINE-HYDROLYZING]"/>
    <property type="match status" value="1"/>
</dbReference>
<dbReference type="PANTHER" id="PTHR11922">
    <property type="entry name" value="GMP SYNTHASE-RELATED"/>
    <property type="match status" value="1"/>
</dbReference>
<dbReference type="Pfam" id="PF00117">
    <property type="entry name" value="GATase"/>
    <property type="match status" value="1"/>
</dbReference>
<dbReference type="Pfam" id="PF00958">
    <property type="entry name" value="GMP_synt_C"/>
    <property type="match status" value="1"/>
</dbReference>
<dbReference type="Pfam" id="PF02540">
    <property type="entry name" value="NAD_synthase"/>
    <property type="match status" value="1"/>
</dbReference>
<dbReference type="SUPFAM" id="SSF52402">
    <property type="entry name" value="Adenine nucleotide alpha hydrolases-like"/>
    <property type="match status" value="1"/>
</dbReference>
<dbReference type="SUPFAM" id="SSF52317">
    <property type="entry name" value="Class I glutamine amidotransferase-like"/>
    <property type="match status" value="1"/>
</dbReference>
<dbReference type="SUPFAM" id="SSF54810">
    <property type="entry name" value="GMP synthetase C-terminal dimerisation domain"/>
    <property type="match status" value="1"/>
</dbReference>
<dbReference type="PROSITE" id="PS51273">
    <property type="entry name" value="GATASE_TYPE_1"/>
    <property type="match status" value="1"/>
</dbReference>
<dbReference type="PROSITE" id="PS51553">
    <property type="entry name" value="GMPS_ATP_PPASE"/>
    <property type="match status" value="1"/>
</dbReference>
<accession>A6H0T6</accession>
<organism>
    <name type="scientific">Flavobacterium psychrophilum (strain ATCC 49511 / DSM 21280 / CIP 103535 / JIP02/86)</name>
    <dbReference type="NCBI Taxonomy" id="402612"/>
    <lineage>
        <taxon>Bacteria</taxon>
        <taxon>Pseudomonadati</taxon>
        <taxon>Bacteroidota</taxon>
        <taxon>Flavobacteriia</taxon>
        <taxon>Flavobacteriales</taxon>
        <taxon>Flavobacteriaceae</taxon>
        <taxon>Flavobacterium</taxon>
    </lineage>
</organism>
<feature type="chain" id="PRO_1000120298" description="GMP synthase [glutamine-hydrolyzing]">
    <location>
        <begin position="1"/>
        <end position="509"/>
    </location>
</feature>
<feature type="domain" description="Glutamine amidotransferase type-1" evidence="1">
    <location>
        <begin position="4"/>
        <end position="193"/>
    </location>
</feature>
<feature type="domain" description="GMPS ATP-PPase" evidence="1">
    <location>
        <begin position="194"/>
        <end position="384"/>
    </location>
</feature>
<feature type="active site" description="Nucleophile" evidence="1">
    <location>
        <position position="79"/>
    </location>
</feature>
<feature type="active site" evidence="1">
    <location>
        <position position="167"/>
    </location>
</feature>
<feature type="active site" evidence="1">
    <location>
        <position position="169"/>
    </location>
</feature>
<feature type="binding site" evidence="1">
    <location>
        <begin position="221"/>
        <end position="227"/>
    </location>
    <ligand>
        <name>ATP</name>
        <dbReference type="ChEBI" id="CHEBI:30616"/>
    </ligand>
</feature>
<gene>
    <name evidence="1" type="primary">guaA</name>
    <name type="ordered locus">FP1894</name>
</gene>
<comment type="function">
    <text evidence="1">Catalyzes the synthesis of GMP from XMP.</text>
</comment>
<comment type="catalytic activity">
    <reaction evidence="1">
        <text>XMP + L-glutamine + ATP + H2O = GMP + L-glutamate + AMP + diphosphate + 2 H(+)</text>
        <dbReference type="Rhea" id="RHEA:11680"/>
        <dbReference type="ChEBI" id="CHEBI:15377"/>
        <dbReference type="ChEBI" id="CHEBI:15378"/>
        <dbReference type="ChEBI" id="CHEBI:29985"/>
        <dbReference type="ChEBI" id="CHEBI:30616"/>
        <dbReference type="ChEBI" id="CHEBI:33019"/>
        <dbReference type="ChEBI" id="CHEBI:57464"/>
        <dbReference type="ChEBI" id="CHEBI:58115"/>
        <dbReference type="ChEBI" id="CHEBI:58359"/>
        <dbReference type="ChEBI" id="CHEBI:456215"/>
        <dbReference type="EC" id="6.3.5.2"/>
    </reaction>
</comment>
<comment type="pathway">
    <text evidence="1">Purine metabolism; GMP biosynthesis; GMP from XMP (L-Gln route): step 1/1.</text>
</comment>
<comment type="subunit">
    <text evidence="1">Homodimer.</text>
</comment>
<evidence type="ECO:0000255" key="1">
    <source>
        <dbReference type="HAMAP-Rule" id="MF_00344"/>
    </source>
</evidence>
<sequence length="509" mass="56573">MQHNVLILDFGSQYTQLIARRVRELNIFCEIFPFDKIPTDLSIYKAVILGGSPFSVRSEDALHPDLSEIRGKLPLLAVCYGAQYLAHFSGGEVAASNTREYGRANLTYIKENETFFENVNLNSQVWMSHSDSIKKLPTNGIKLASTQDVENAAYKIEGETTYAIQYHPEVFHSTDGKQMLENFLVKIAQVPQNFTPNAFVSDMVAELKEKLQDDKVVLGLSGGVDSTVAAVLLHQAIGKNLYCIFVNNGLLRKNEFQSVLDQYKGMGLNVKGVDAGDRFLSELAGISDPETKRKTIGRVFIEVFDDESKIIENVKWLAQGTIYPDVIESVSVKGPSATIKSHHNVGGLPDYMKLQIVEPLRMLFKDEVRRVGATLGIDAELLGRHPFPGPGLSIRILGDITPEKVQILQDVDAVFINGLKEHGLYDKVWQAGAILLPVNSVGVMGDERTYEKVVALRAVESTDGMTADWVHLPYEFLMKISNDIINKVKGVNRVVYDISSKPPATIEWE</sequence>